<evidence type="ECO:0000255" key="1">
    <source>
        <dbReference type="HAMAP-Rule" id="MF_00272"/>
    </source>
</evidence>
<evidence type="ECO:0000255" key="2">
    <source>
        <dbReference type="PROSITE-ProRule" id="PRU01066"/>
    </source>
</evidence>
<protein>
    <recommendedName>
        <fullName evidence="1">Glycine cleavage system H protein</fullName>
    </recommendedName>
</protein>
<accession>Q317X3</accession>
<proteinExistence type="inferred from homology"/>
<sequence>MSYQFPDNLNYADTHEYVLEEEGLLKIGVSEFAIDQLGDIVFVELADQGATLEKGETFGTIESVKAVEEVYLPFSGEIVSVNESVIDNPELLQNDPIGEGWLVILKPESKVSIADLMTSEEYKSKVMPN</sequence>
<name>GCSH_PROM9</name>
<keyword id="KW-0450">Lipoyl</keyword>
<reference key="1">
    <citation type="journal article" date="2006" name="Science">
        <title>Genomic islands and the ecology and evolution of Prochlorococcus.</title>
        <authorList>
            <person name="Coleman M.L."/>
            <person name="Sullivan M.B."/>
            <person name="Martiny A.C."/>
            <person name="Steglich C."/>
            <person name="Barry K."/>
            <person name="Delong E.F."/>
            <person name="Chisholm S.W."/>
        </authorList>
    </citation>
    <scope>NUCLEOTIDE SEQUENCE [LARGE SCALE GENOMIC DNA]</scope>
    <source>
        <strain>MIT 9312</strain>
    </source>
</reference>
<feature type="chain" id="PRO_0000302413" description="Glycine cleavage system H protein">
    <location>
        <begin position="1"/>
        <end position="129"/>
    </location>
</feature>
<feature type="domain" description="Lipoyl-binding" evidence="2">
    <location>
        <begin position="24"/>
        <end position="106"/>
    </location>
</feature>
<feature type="modified residue" description="N6-lipoyllysine" evidence="1">
    <location>
        <position position="65"/>
    </location>
</feature>
<comment type="function">
    <text evidence="1">The glycine cleavage system catalyzes the degradation of glycine. The H protein shuttles the methylamine group of glycine from the P protein to the T protein.</text>
</comment>
<comment type="cofactor">
    <cofactor evidence="1">
        <name>(R)-lipoate</name>
        <dbReference type="ChEBI" id="CHEBI:83088"/>
    </cofactor>
    <text evidence="1">Binds 1 lipoyl cofactor covalently.</text>
</comment>
<comment type="subunit">
    <text evidence="1">The glycine cleavage system is composed of four proteins: P, T, L and H.</text>
</comment>
<comment type="similarity">
    <text evidence="1">Belongs to the GcvH family.</text>
</comment>
<dbReference type="EMBL" id="CP000111">
    <property type="protein sequence ID" value="ABB50822.1"/>
    <property type="molecule type" value="Genomic_DNA"/>
</dbReference>
<dbReference type="RefSeq" id="WP_011377303.1">
    <property type="nucleotide sequence ID" value="NC_007577.1"/>
</dbReference>
<dbReference type="SMR" id="Q317X3"/>
<dbReference type="STRING" id="74546.PMT9312_1761"/>
<dbReference type="KEGG" id="pmi:PMT9312_1761"/>
<dbReference type="eggNOG" id="COG0509">
    <property type="taxonomic scope" value="Bacteria"/>
</dbReference>
<dbReference type="HOGENOM" id="CLU_097408_2_2_3"/>
<dbReference type="OrthoDB" id="9796712at2"/>
<dbReference type="Proteomes" id="UP000002715">
    <property type="component" value="Chromosome"/>
</dbReference>
<dbReference type="GO" id="GO:0005829">
    <property type="term" value="C:cytosol"/>
    <property type="evidence" value="ECO:0007669"/>
    <property type="project" value="TreeGrafter"/>
</dbReference>
<dbReference type="GO" id="GO:0005960">
    <property type="term" value="C:glycine cleavage complex"/>
    <property type="evidence" value="ECO:0007669"/>
    <property type="project" value="InterPro"/>
</dbReference>
<dbReference type="GO" id="GO:0019464">
    <property type="term" value="P:glycine decarboxylation via glycine cleavage system"/>
    <property type="evidence" value="ECO:0007669"/>
    <property type="project" value="UniProtKB-UniRule"/>
</dbReference>
<dbReference type="CDD" id="cd06848">
    <property type="entry name" value="GCS_H"/>
    <property type="match status" value="1"/>
</dbReference>
<dbReference type="Gene3D" id="2.40.50.100">
    <property type="match status" value="1"/>
</dbReference>
<dbReference type="HAMAP" id="MF_00272">
    <property type="entry name" value="GcvH"/>
    <property type="match status" value="1"/>
</dbReference>
<dbReference type="InterPro" id="IPR003016">
    <property type="entry name" value="2-oxoA_DH_lipoyl-BS"/>
</dbReference>
<dbReference type="InterPro" id="IPR000089">
    <property type="entry name" value="Biotin_lipoyl"/>
</dbReference>
<dbReference type="InterPro" id="IPR002930">
    <property type="entry name" value="GCV_H"/>
</dbReference>
<dbReference type="InterPro" id="IPR033753">
    <property type="entry name" value="GCV_H/Fam206"/>
</dbReference>
<dbReference type="InterPro" id="IPR017453">
    <property type="entry name" value="GCV_H_sub"/>
</dbReference>
<dbReference type="InterPro" id="IPR011053">
    <property type="entry name" value="Single_hybrid_motif"/>
</dbReference>
<dbReference type="NCBIfam" id="TIGR00527">
    <property type="entry name" value="gcvH"/>
    <property type="match status" value="1"/>
</dbReference>
<dbReference type="NCBIfam" id="NF002270">
    <property type="entry name" value="PRK01202.1"/>
    <property type="match status" value="1"/>
</dbReference>
<dbReference type="PANTHER" id="PTHR11715">
    <property type="entry name" value="GLYCINE CLEAVAGE SYSTEM H PROTEIN"/>
    <property type="match status" value="1"/>
</dbReference>
<dbReference type="PANTHER" id="PTHR11715:SF3">
    <property type="entry name" value="GLYCINE CLEAVAGE SYSTEM H PROTEIN-RELATED"/>
    <property type="match status" value="1"/>
</dbReference>
<dbReference type="Pfam" id="PF01597">
    <property type="entry name" value="GCV_H"/>
    <property type="match status" value="1"/>
</dbReference>
<dbReference type="SUPFAM" id="SSF51230">
    <property type="entry name" value="Single hybrid motif"/>
    <property type="match status" value="1"/>
</dbReference>
<dbReference type="PROSITE" id="PS50968">
    <property type="entry name" value="BIOTINYL_LIPOYL"/>
    <property type="match status" value="1"/>
</dbReference>
<dbReference type="PROSITE" id="PS00189">
    <property type="entry name" value="LIPOYL"/>
    <property type="match status" value="1"/>
</dbReference>
<gene>
    <name evidence="1" type="primary">gcvH</name>
    <name type="ordered locus">PMT9312_1761</name>
</gene>
<organism>
    <name type="scientific">Prochlorococcus marinus (strain MIT 9312)</name>
    <dbReference type="NCBI Taxonomy" id="74546"/>
    <lineage>
        <taxon>Bacteria</taxon>
        <taxon>Bacillati</taxon>
        <taxon>Cyanobacteriota</taxon>
        <taxon>Cyanophyceae</taxon>
        <taxon>Synechococcales</taxon>
        <taxon>Prochlorococcaceae</taxon>
        <taxon>Prochlorococcus</taxon>
    </lineage>
</organism>